<feature type="initiator methionine" description="Removed">
    <location>
        <position position="1"/>
    </location>
</feature>
<feature type="chain" id="PRO_0000073782" description="Neurocalcin-delta">
    <location>
        <begin position="2"/>
        <end position="193"/>
    </location>
</feature>
<feature type="domain" description="EF-hand 1" evidence="3">
    <location>
        <begin position="40"/>
        <end position="58"/>
    </location>
</feature>
<feature type="domain" description="EF-hand 2" evidence="3">
    <location>
        <begin position="60"/>
        <end position="95"/>
    </location>
</feature>
<feature type="domain" description="EF-hand 3" evidence="3">
    <location>
        <begin position="96"/>
        <end position="131"/>
    </location>
</feature>
<feature type="domain" description="EF-hand 4" evidence="3">
    <location>
        <begin position="144"/>
        <end position="179"/>
    </location>
</feature>
<feature type="binding site" evidence="3">
    <location>
        <position position="73"/>
    </location>
    <ligand>
        <name>Ca(2+)</name>
        <dbReference type="ChEBI" id="CHEBI:29108"/>
        <label>1</label>
    </ligand>
</feature>
<feature type="binding site" evidence="3">
    <location>
        <position position="75"/>
    </location>
    <ligand>
        <name>Ca(2+)</name>
        <dbReference type="ChEBI" id="CHEBI:29108"/>
        <label>1</label>
    </ligand>
</feature>
<feature type="binding site" evidence="3">
    <location>
        <position position="77"/>
    </location>
    <ligand>
        <name>Ca(2+)</name>
        <dbReference type="ChEBI" id="CHEBI:29108"/>
        <label>1</label>
    </ligand>
</feature>
<feature type="binding site" evidence="3">
    <location>
        <position position="79"/>
    </location>
    <ligand>
        <name>Ca(2+)</name>
        <dbReference type="ChEBI" id="CHEBI:29108"/>
        <label>1</label>
    </ligand>
</feature>
<feature type="binding site" evidence="3">
    <location>
        <position position="84"/>
    </location>
    <ligand>
        <name>Ca(2+)</name>
        <dbReference type="ChEBI" id="CHEBI:29108"/>
        <label>1</label>
    </ligand>
</feature>
<feature type="binding site" evidence="3">
    <location>
        <position position="109"/>
    </location>
    <ligand>
        <name>Ca(2+)</name>
        <dbReference type="ChEBI" id="CHEBI:29108"/>
        <label>2</label>
    </ligand>
</feature>
<feature type="binding site" evidence="3">
    <location>
        <position position="111"/>
    </location>
    <ligand>
        <name>Ca(2+)</name>
        <dbReference type="ChEBI" id="CHEBI:29108"/>
        <label>2</label>
    </ligand>
</feature>
<feature type="binding site" evidence="3">
    <location>
        <position position="113"/>
    </location>
    <ligand>
        <name>Ca(2+)</name>
        <dbReference type="ChEBI" id="CHEBI:29108"/>
        <label>2</label>
    </ligand>
</feature>
<feature type="binding site" evidence="3">
    <location>
        <position position="115"/>
    </location>
    <ligand>
        <name>Ca(2+)</name>
        <dbReference type="ChEBI" id="CHEBI:29108"/>
        <label>2</label>
    </ligand>
</feature>
<feature type="binding site" evidence="3">
    <location>
        <position position="120"/>
    </location>
    <ligand>
        <name>Ca(2+)</name>
        <dbReference type="ChEBI" id="CHEBI:29108"/>
        <label>2</label>
    </ligand>
</feature>
<feature type="binding site" evidence="3">
    <location>
        <position position="157"/>
    </location>
    <ligand>
        <name>Ca(2+)</name>
        <dbReference type="ChEBI" id="CHEBI:29108"/>
        <label>3</label>
    </ligand>
</feature>
<feature type="binding site" evidence="3">
    <location>
        <position position="159"/>
    </location>
    <ligand>
        <name>Ca(2+)</name>
        <dbReference type="ChEBI" id="CHEBI:29108"/>
        <label>3</label>
    </ligand>
</feature>
<feature type="binding site" evidence="3">
    <location>
        <position position="161"/>
    </location>
    <ligand>
        <name>Ca(2+)</name>
        <dbReference type="ChEBI" id="CHEBI:29108"/>
        <label>3</label>
    </ligand>
</feature>
<feature type="binding site" evidence="3">
    <location>
        <position position="163"/>
    </location>
    <ligand>
        <name>Ca(2+)</name>
        <dbReference type="ChEBI" id="CHEBI:29108"/>
        <label>3</label>
    </ligand>
</feature>
<feature type="binding site" evidence="3">
    <location>
        <position position="168"/>
    </location>
    <ligand>
        <name>Ca(2+)</name>
        <dbReference type="ChEBI" id="CHEBI:29108"/>
        <label>3</label>
    </ligand>
</feature>
<feature type="lipid moiety-binding region" description="N-myristoyl glycine" evidence="1">
    <location>
        <position position="2"/>
    </location>
</feature>
<feature type="sequence conflict" description="In Ref. 2; CAB66547." evidence="4" ref="2">
    <original>E</original>
    <variation>V</variation>
    <location>
        <position position="123"/>
    </location>
</feature>
<feature type="sequence conflict" description="In Ref. 3; AAH36098." evidence="4" ref="3">
    <original>L</original>
    <variation>M</variation>
    <location>
        <position position="166"/>
    </location>
</feature>
<gene>
    <name type="primary">NCALD</name>
</gene>
<reference key="1">
    <citation type="journal article" date="2001" name="Biochim. Biophys. Acta">
        <title>Molecular cloning, mapping and characterization of the human neurocalcin delta gene (NCALD).</title>
        <authorList>
            <person name="Wang W."/>
            <person name="Zhou Z."/>
            <person name="Zhao W."/>
            <person name="Huang Y."/>
            <person name="Tang R."/>
            <person name="Ying K."/>
            <person name="Xie Y."/>
            <person name="Mao Y."/>
        </authorList>
    </citation>
    <scope>NUCLEOTIDE SEQUENCE [MRNA]</scope>
    <source>
        <tissue>Fetal brain</tissue>
    </source>
</reference>
<reference key="2">
    <citation type="journal article" date="2001" name="Genome Res.">
        <title>Towards a catalog of human genes and proteins: sequencing and analysis of 500 novel complete protein coding human cDNAs.</title>
        <authorList>
            <person name="Wiemann S."/>
            <person name="Weil B."/>
            <person name="Wellenreuther R."/>
            <person name="Gassenhuber J."/>
            <person name="Glassl S."/>
            <person name="Ansorge W."/>
            <person name="Boecher M."/>
            <person name="Bloecker H."/>
            <person name="Bauersachs S."/>
            <person name="Blum H."/>
            <person name="Lauber J."/>
            <person name="Duesterhoeft A."/>
            <person name="Beyer A."/>
            <person name="Koehrer K."/>
            <person name="Strack N."/>
            <person name="Mewes H.-W."/>
            <person name="Ottenwaelder B."/>
            <person name="Obermaier B."/>
            <person name="Tampe J."/>
            <person name="Heubner D."/>
            <person name="Wambutt R."/>
            <person name="Korn B."/>
            <person name="Klein M."/>
            <person name="Poustka A."/>
        </authorList>
    </citation>
    <scope>NUCLEOTIDE SEQUENCE [LARGE SCALE MRNA]</scope>
    <source>
        <tissue>Brain</tissue>
    </source>
</reference>
<reference key="3">
    <citation type="journal article" date="2004" name="Genome Res.">
        <title>The status, quality, and expansion of the NIH full-length cDNA project: the Mammalian Gene Collection (MGC).</title>
        <authorList>
            <consortium name="The MGC Project Team"/>
        </authorList>
    </citation>
    <scope>NUCLEOTIDE SEQUENCE [LARGE SCALE MRNA]</scope>
    <source>
        <tissue>Brain</tissue>
    </source>
</reference>
<dbReference type="EMBL" id="AF251061">
    <property type="protein sequence ID" value="AAK34951.1"/>
    <property type="molecule type" value="mRNA"/>
</dbReference>
<dbReference type="EMBL" id="AL136612">
    <property type="protein sequence ID" value="CAB66547.1"/>
    <property type="molecule type" value="mRNA"/>
</dbReference>
<dbReference type="EMBL" id="BC036098">
    <property type="protein sequence ID" value="AAH36098.1"/>
    <property type="molecule type" value="mRNA"/>
</dbReference>
<dbReference type="EMBL" id="BC063428">
    <property type="protein sequence ID" value="AAH63428.1"/>
    <property type="molecule type" value="mRNA"/>
</dbReference>
<dbReference type="CCDS" id="CCDS6292.1"/>
<dbReference type="RefSeq" id="NP_001035714.1">
    <property type="nucleotide sequence ID" value="NM_001040624.2"/>
</dbReference>
<dbReference type="RefSeq" id="NP_001035715.1">
    <property type="nucleotide sequence ID" value="NM_001040625.2"/>
</dbReference>
<dbReference type="RefSeq" id="NP_001035716.1">
    <property type="nucleotide sequence ID" value="NM_001040626.2"/>
</dbReference>
<dbReference type="RefSeq" id="NP_001035717.1">
    <property type="nucleotide sequence ID" value="NM_001040627.2"/>
</dbReference>
<dbReference type="RefSeq" id="NP_001035718.1">
    <property type="nucleotide sequence ID" value="NM_001040628.2"/>
</dbReference>
<dbReference type="RefSeq" id="NP_001035719.1">
    <property type="nucleotide sequence ID" value="NM_001040629.2"/>
</dbReference>
<dbReference type="RefSeq" id="NP_001035720.1">
    <property type="nucleotide sequence ID" value="NM_001040630.2"/>
</dbReference>
<dbReference type="RefSeq" id="NP_114430.2">
    <property type="nucleotide sequence ID" value="NM_032041.3"/>
</dbReference>
<dbReference type="RefSeq" id="XP_011515634.1">
    <property type="nucleotide sequence ID" value="XM_011517332.2"/>
</dbReference>
<dbReference type="RefSeq" id="XP_011515635.1">
    <property type="nucleotide sequence ID" value="XM_011517333.2"/>
</dbReference>
<dbReference type="RefSeq" id="XP_011515636.1">
    <property type="nucleotide sequence ID" value="XM_011517334.2"/>
</dbReference>
<dbReference type="RefSeq" id="XP_011515637.1">
    <property type="nucleotide sequence ID" value="XM_011517335.2"/>
</dbReference>
<dbReference type="RefSeq" id="XP_016869390.1">
    <property type="nucleotide sequence ID" value="XM_017013901.1"/>
</dbReference>
<dbReference type="RefSeq" id="XP_016869391.1">
    <property type="nucleotide sequence ID" value="XM_017013902.1"/>
</dbReference>
<dbReference type="RefSeq" id="XP_047278259.1">
    <property type="nucleotide sequence ID" value="XM_047422303.1"/>
</dbReference>
<dbReference type="RefSeq" id="XP_047278260.1">
    <property type="nucleotide sequence ID" value="XM_047422304.1"/>
</dbReference>
<dbReference type="RefSeq" id="XP_047278261.1">
    <property type="nucleotide sequence ID" value="XM_047422305.1"/>
</dbReference>
<dbReference type="RefSeq" id="XP_047278262.1">
    <property type="nucleotide sequence ID" value="XM_047422306.1"/>
</dbReference>
<dbReference type="RefSeq" id="XP_047278263.1">
    <property type="nucleotide sequence ID" value="XM_047422307.1"/>
</dbReference>
<dbReference type="RefSeq" id="XP_047278264.1">
    <property type="nucleotide sequence ID" value="XM_047422308.1"/>
</dbReference>
<dbReference type="RefSeq" id="XP_047278265.1">
    <property type="nucleotide sequence ID" value="XM_047422309.1"/>
</dbReference>
<dbReference type="RefSeq" id="XP_047278267.1">
    <property type="nucleotide sequence ID" value="XM_047422311.1"/>
</dbReference>
<dbReference type="RefSeq" id="XP_047278268.1">
    <property type="nucleotide sequence ID" value="XM_047422312.1"/>
</dbReference>
<dbReference type="RefSeq" id="XP_047278269.1">
    <property type="nucleotide sequence ID" value="XM_047422313.1"/>
</dbReference>
<dbReference type="RefSeq" id="XP_047278270.1">
    <property type="nucleotide sequence ID" value="XM_047422314.1"/>
</dbReference>
<dbReference type="RefSeq" id="XP_047278271.1">
    <property type="nucleotide sequence ID" value="XM_047422315.1"/>
</dbReference>
<dbReference type="RefSeq" id="XP_047278272.1">
    <property type="nucleotide sequence ID" value="XM_047422316.1"/>
</dbReference>
<dbReference type="RefSeq" id="XP_047278273.1">
    <property type="nucleotide sequence ID" value="XM_047422317.1"/>
</dbReference>
<dbReference type="RefSeq" id="XP_047278274.1">
    <property type="nucleotide sequence ID" value="XM_047422318.1"/>
</dbReference>
<dbReference type="RefSeq" id="XP_047278275.1">
    <property type="nucleotide sequence ID" value="XM_047422319.1"/>
</dbReference>
<dbReference type="SMR" id="P61601"/>
<dbReference type="BioGRID" id="123839">
    <property type="interactions" value="52"/>
</dbReference>
<dbReference type="FunCoup" id="P61601">
    <property type="interactions" value="747"/>
</dbReference>
<dbReference type="IntAct" id="P61601">
    <property type="interactions" value="47"/>
</dbReference>
<dbReference type="MINT" id="P61601"/>
<dbReference type="STRING" id="9606.ENSP00000379256"/>
<dbReference type="iPTMnet" id="P61601"/>
<dbReference type="PhosphoSitePlus" id="P61601"/>
<dbReference type="SwissPalm" id="P61601"/>
<dbReference type="BioMuta" id="NCALD"/>
<dbReference type="DMDM" id="47606440"/>
<dbReference type="jPOST" id="P61601"/>
<dbReference type="MassIVE" id="P61601"/>
<dbReference type="PaxDb" id="9606-ENSP00000379256"/>
<dbReference type="PeptideAtlas" id="P61601"/>
<dbReference type="ProteomicsDB" id="57324"/>
<dbReference type="Pumba" id="P61601"/>
<dbReference type="Antibodypedia" id="42836">
    <property type="antibodies" value="173 antibodies from 27 providers"/>
</dbReference>
<dbReference type="DNASU" id="83988"/>
<dbReference type="Ensembl" id="ENST00000220931.11">
    <property type="protein sequence ID" value="ENSP00000220931.6"/>
    <property type="gene ID" value="ENSG00000104490.18"/>
</dbReference>
<dbReference type="Ensembl" id="ENST00000311028.4">
    <property type="protein sequence ID" value="ENSP00000310587.3"/>
    <property type="gene ID" value="ENSG00000104490.18"/>
</dbReference>
<dbReference type="Ensembl" id="ENST00000395923.5">
    <property type="protein sequence ID" value="ENSP00000379256.1"/>
    <property type="gene ID" value="ENSG00000104490.18"/>
</dbReference>
<dbReference type="Ensembl" id="ENST00000519508.6">
    <property type="protein sequence ID" value="ENSP00000430476.1"/>
    <property type="gene ID" value="ENSG00000104490.18"/>
</dbReference>
<dbReference type="Ensembl" id="ENST00000521599.5">
    <property type="protein sequence ID" value="ENSP00000428105.1"/>
    <property type="gene ID" value="ENSG00000104490.18"/>
</dbReference>
<dbReference type="GeneID" id="83988"/>
<dbReference type="KEGG" id="hsa:83988"/>
<dbReference type="MANE-Select" id="ENST00000220931.11">
    <property type="protein sequence ID" value="ENSP00000220931.6"/>
    <property type="RefSeq nucleotide sequence ID" value="NM_032041.3"/>
    <property type="RefSeq protein sequence ID" value="NP_114430.2"/>
</dbReference>
<dbReference type="UCSC" id="uc003yke.4">
    <property type="organism name" value="human"/>
</dbReference>
<dbReference type="AGR" id="HGNC:7655"/>
<dbReference type="CTD" id="83988"/>
<dbReference type="DisGeNET" id="83988"/>
<dbReference type="GeneCards" id="NCALD"/>
<dbReference type="HGNC" id="HGNC:7655">
    <property type="gene designation" value="NCALD"/>
</dbReference>
<dbReference type="HPA" id="ENSG00000104490">
    <property type="expression patterns" value="Tissue enhanced (brain, salivary gland)"/>
</dbReference>
<dbReference type="MIM" id="606722">
    <property type="type" value="gene"/>
</dbReference>
<dbReference type="neXtProt" id="NX_P61601"/>
<dbReference type="OpenTargets" id="ENSG00000104490"/>
<dbReference type="PharmGKB" id="PA31458"/>
<dbReference type="VEuPathDB" id="HostDB:ENSG00000104490"/>
<dbReference type="eggNOG" id="KOG0044">
    <property type="taxonomic scope" value="Eukaryota"/>
</dbReference>
<dbReference type="GeneTree" id="ENSGT00940000158862"/>
<dbReference type="HOGENOM" id="CLU_072366_1_0_1"/>
<dbReference type="InParanoid" id="P61601"/>
<dbReference type="OMA" id="MGCVCMK"/>
<dbReference type="OrthoDB" id="191686at2759"/>
<dbReference type="PAN-GO" id="P61601">
    <property type="GO annotations" value="5 GO annotations based on evolutionary models"/>
</dbReference>
<dbReference type="PhylomeDB" id="P61601"/>
<dbReference type="TreeFam" id="TF300009"/>
<dbReference type="PathwayCommons" id="P61601"/>
<dbReference type="Reactome" id="R-HSA-451308">
    <property type="pathway name" value="Activation of Ca-permeable Kainate Receptor"/>
</dbReference>
<dbReference type="SignaLink" id="P61601"/>
<dbReference type="BioGRID-ORCS" id="83988">
    <property type="hits" value="8 hits in 1153 CRISPR screens"/>
</dbReference>
<dbReference type="CD-CODE" id="FB4E32DD">
    <property type="entry name" value="Presynaptic clusters and postsynaptic densities"/>
</dbReference>
<dbReference type="ChiTaRS" id="NCALD">
    <property type="organism name" value="human"/>
</dbReference>
<dbReference type="GenomeRNAi" id="83988"/>
<dbReference type="Pharos" id="P61601">
    <property type="development level" value="Tbio"/>
</dbReference>
<dbReference type="PRO" id="PR:P61601"/>
<dbReference type="Proteomes" id="UP000005640">
    <property type="component" value="Chromosome 8"/>
</dbReference>
<dbReference type="RNAct" id="P61601">
    <property type="molecule type" value="protein"/>
</dbReference>
<dbReference type="Bgee" id="ENSG00000104490">
    <property type="expression patterns" value="Expressed in Brodmann (1909) area 10 and 151 other cell types or tissues"/>
</dbReference>
<dbReference type="ExpressionAtlas" id="P61601">
    <property type="expression patterns" value="baseline and differential"/>
</dbReference>
<dbReference type="GO" id="GO:0030130">
    <property type="term" value="C:clathrin coat of trans-Golgi network vesicle"/>
    <property type="evidence" value="ECO:0000303"/>
    <property type="project" value="UniProtKB"/>
</dbReference>
<dbReference type="GO" id="GO:0005829">
    <property type="term" value="C:cytosol"/>
    <property type="evidence" value="ECO:0000304"/>
    <property type="project" value="Reactome"/>
</dbReference>
<dbReference type="GO" id="GO:0003779">
    <property type="term" value="F:actin binding"/>
    <property type="evidence" value="ECO:0000314"/>
    <property type="project" value="UniProtKB"/>
</dbReference>
<dbReference type="GO" id="GO:0043014">
    <property type="term" value="F:alpha-tubulin binding"/>
    <property type="evidence" value="ECO:0007669"/>
    <property type="project" value="Ensembl"/>
</dbReference>
<dbReference type="GO" id="GO:0005509">
    <property type="term" value="F:calcium ion binding"/>
    <property type="evidence" value="ECO:0000318"/>
    <property type="project" value="GO_Central"/>
</dbReference>
<dbReference type="GO" id="GO:0030276">
    <property type="term" value="F:clathrin binding"/>
    <property type="evidence" value="ECO:0000314"/>
    <property type="project" value="UniProtKB"/>
</dbReference>
<dbReference type="GO" id="GO:0015631">
    <property type="term" value="F:tubulin binding"/>
    <property type="evidence" value="ECO:0000314"/>
    <property type="project" value="UniProtKB"/>
</dbReference>
<dbReference type="GO" id="GO:0019722">
    <property type="term" value="P:calcium-mediated signaling"/>
    <property type="evidence" value="ECO:0000318"/>
    <property type="project" value="GO_Central"/>
</dbReference>
<dbReference type="GO" id="GO:0009966">
    <property type="term" value="P:regulation of signal transduction"/>
    <property type="evidence" value="ECO:0000318"/>
    <property type="project" value="GO_Central"/>
</dbReference>
<dbReference type="GO" id="GO:0003073">
    <property type="term" value="P:regulation of systemic arterial blood pressure"/>
    <property type="evidence" value="ECO:0007669"/>
    <property type="project" value="Ensembl"/>
</dbReference>
<dbReference type="GO" id="GO:0016192">
    <property type="term" value="P:vesicle-mediated transport"/>
    <property type="evidence" value="ECO:0000303"/>
    <property type="project" value="UniProtKB"/>
</dbReference>
<dbReference type="CDD" id="cd00051">
    <property type="entry name" value="EFh"/>
    <property type="match status" value="2"/>
</dbReference>
<dbReference type="FunFam" id="1.10.238.10:FF:000009">
    <property type="entry name" value="Visinin-like protein 1"/>
    <property type="match status" value="1"/>
</dbReference>
<dbReference type="Gene3D" id="1.10.238.10">
    <property type="entry name" value="EF-hand"/>
    <property type="match status" value="1"/>
</dbReference>
<dbReference type="InterPro" id="IPR011992">
    <property type="entry name" value="EF-hand-dom_pair"/>
</dbReference>
<dbReference type="InterPro" id="IPR018247">
    <property type="entry name" value="EF_Hand_1_Ca_BS"/>
</dbReference>
<dbReference type="InterPro" id="IPR002048">
    <property type="entry name" value="EF_hand_dom"/>
</dbReference>
<dbReference type="InterPro" id="IPR028846">
    <property type="entry name" value="Recoverin"/>
</dbReference>
<dbReference type="PANTHER" id="PTHR23055">
    <property type="entry name" value="CALCIUM BINDING PROTEINS"/>
    <property type="match status" value="1"/>
</dbReference>
<dbReference type="PANTHER" id="PTHR23055:SF87">
    <property type="entry name" value="NEUROCALCIN-DELTA"/>
    <property type="match status" value="1"/>
</dbReference>
<dbReference type="Pfam" id="PF00036">
    <property type="entry name" value="EF-hand_1"/>
    <property type="match status" value="1"/>
</dbReference>
<dbReference type="Pfam" id="PF13499">
    <property type="entry name" value="EF-hand_7"/>
    <property type="match status" value="1"/>
</dbReference>
<dbReference type="PRINTS" id="PR00450">
    <property type="entry name" value="RECOVERIN"/>
</dbReference>
<dbReference type="SMART" id="SM00054">
    <property type="entry name" value="EFh"/>
    <property type="match status" value="3"/>
</dbReference>
<dbReference type="SUPFAM" id="SSF47473">
    <property type="entry name" value="EF-hand"/>
    <property type="match status" value="1"/>
</dbReference>
<dbReference type="PROSITE" id="PS00018">
    <property type="entry name" value="EF_HAND_1"/>
    <property type="match status" value="3"/>
</dbReference>
<dbReference type="PROSITE" id="PS50222">
    <property type="entry name" value="EF_HAND_2"/>
    <property type="match status" value="4"/>
</dbReference>
<name>NCALD_HUMAN</name>
<organism>
    <name type="scientific">Homo sapiens</name>
    <name type="common">Human</name>
    <dbReference type="NCBI Taxonomy" id="9606"/>
    <lineage>
        <taxon>Eukaryota</taxon>
        <taxon>Metazoa</taxon>
        <taxon>Chordata</taxon>
        <taxon>Craniata</taxon>
        <taxon>Vertebrata</taxon>
        <taxon>Euteleostomi</taxon>
        <taxon>Mammalia</taxon>
        <taxon>Eutheria</taxon>
        <taxon>Euarchontoglires</taxon>
        <taxon>Primates</taxon>
        <taxon>Haplorrhini</taxon>
        <taxon>Catarrhini</taxon>
        <taxon>Hominidae</taxon>
        <taxon>Homo</taxon>
    </lineage>
</organism>
<accession>P61601</accession>
<accession>P29554</accession>
<accession>Q8IYC3</accession>
<accession>Q9H0W2</accession>
<proteinExistence type="evidence at protein level"/>
<evidence type="ECO:0000250" key="1"/>
<evidence type="ECO:0000250" key="2">
    <source>
        <dbReference type="UniProtKB" id="Q5PQN0"/>
    </source>
</evidence>
<evidence type="ECO:0000255" key="3">
    <source>
        <dbReference type="PROSITE-ProRule" id="PRU00448"/>
    </source>
</evidence>
<evidence type="ECO:0000305" key="4"/>
<comment type="function">
    <text>May be involved in the calcium-dependent regulation of rhodopsin phosphorylation. Binds three calcium ions.</text>
</comment>
<comment type="subunit">
    <text evidence="2">Interacts with GUCY2D.</text>
</comment>
<comment type="interaction">
    <interactant intactId="EBI-749635">
        <id>P61601</id>
    </interactant>
    <interactant intactId="EBI-5272188">
        <id>P23352</id>
        <label>ANOS1</label>
    </interactant>
    <organismsDiffer>false</organismsDiffer>
    <experiments>3</experiments>
</comment>
<comment type="interaction">
    <interactant intactId="EBI-749635">
        <id>P61601</id>
    </interactant>
    <interactant intactId="EBI-11976321">
        <id>O95236-2</id>
        <label>APOL3</label>
    </interactant>
    <organismsDiffer>false</organismsDiffer>
    <experiments>3</experiments>
</comment>
<comment type="interaction">
    <interactant intactId="EBI-749635">
        <id>P61601</id>
    </interactant>
    <interactant intactId="EBI-12061599">
        <id>Q9H6X5-2</id>
        <label>C19orf44</label>
    </interactant>
    <organismsDiffer>false</organismsDiffer>
    <experiments>3</experiments>
</comment>
<comment type="interaction">
    <interactant intactId="EBI-749635">
        <id>P61601</id>
    </interactant>
    <interactant intactId="EBI-2817707">
        <id>Q9BXJ5</id>
        <label>C1QTNF2</label>
    </interactant>
    <organismsDiffer>false</organismsDiffer>
    <experiments>12</experiments>
</comment>
<comment type="interaction">
    <interactant intactId="EBI-749635">
        <id>P61601</id>
    </interactant>
    <interactant intactId="EBI-12884642">
        <id>Q03060-25</id>
        <label>CREM</label>
    </interactant>
    <organismsDiffer>false</organismsDiffer>
    <experiments>5</experiments>
</comment>
<comment type="interaction">
    <interactant intactId="EBI-749635">
        <id>P61601</id>
    </interactant>
    <interactant intactId="EBI-740376">
        <id>Q86UW9</id>
        <label>DTX2</label>
    </interactant>
    <organismsDiffer>false</organismsDiffer>
    <experiments>12</experiments>
</comment>
<comment type="interaction">
    <interactant intactId="EBI-749635">
        <id>P61601</id>
    </interactant>
    <interactant intactId="EBI-11479013">
        <id>P10767</id>
        <label>FGF6</label>
    </interactant>
    <organismsDiffer>false</organismsDiffer>
    <experiments>3</experiments>
</comment>
<comment type="interaction">
    <interactant intactId="EBI-749635">
        <id>P61601</id>
    </interactant>
    <interactant intactId="EBI-746917">
        <id>O75084</id>
        <label>FZD7</label>
    </interactant>
    <organismsDiffer>false</organismsDiffer>
    <experiments>3</experiments>
</comment>
<comment type="interaction">
    <interactant intactId="EBI-749635">
        <id>P61601</id>
    </interactant>
    <interactant intactId="EBI-4403685">
        <id>Q7Z5G4</id>
        <label>GOLGA7</label>
    </interactant>
    <organismsDiffer>false</organismsDiffer>
    <experiments>3</experiments>
</comment>
<comment type="interaction">
    <interactant intactId="EBI-749635">
        <id>P61601</id>
    </interactant>
    <interactant intactId="EBI-749411">
        <id>Q96SL4</id>
        <label>GPX7</label>
    </interactant>
    <organismsDiffer>false</organismsDiffer>
    <experiments>3</experiments>
</comment>
<comment type="interaction">
    <interactant intactId="EBI-749635">
        <id>P61601</id>
    </interactant>
    <interactant intactId="EBI-720457">
        <id>Q96EW2</id>
        <label>HSPBAP1</label>
    </interactant>
    <organismsDiffer>false</organismsDiffer>
    <experiments>2</experiments>
</comment>
<comment type="interaction">
    <interactant intactId="EBI-749635">
        <id>P61601</id>
    </interactant>
    <interactant intactId="EBI-947015">
        <id>P24592</id>
        <label>IGFBP6</label>
    </interactant>
    <organismsDiffer>false</organismsDiffer>
    <experiments>3</experiments>
</comment>
<comment type="interaction">
    <interactant intactId="EBI-749635">
        <id>P61601</id>
    </interactant>
    <interactant intactId="EBI-702198">
        <id>P02538</id>
        <label>KRT6A</label>
    </interactant>
    <organismsDiffer>false</organismsDiffer>
    <experiments>3</experiments>
</comment>
<comment type="interaction">
    <interactant intactId="EBI-749635">
        <id>P61601</id>
    </interactant>
    <interactant intactId="EBI-10246750">
        <id>Q5TA82</id>
        <label>LCE2D</label>
    </interactant>
    <organismsDiffer>false</organismsDiffer>
    <experiments>3</experiments>
</comment>
<comment type="interaction">
    <interactant intactId="EBI-749635">
        <id>P61601</id>
    </interactant>
    <interactant intactId="EBI-1037189">
        <id>P15018</id>
        <label>LIF</label>
    </interactant>
    <organismsDiffer>false</organismsDiffer>
    <experiments>3</experiments>
</comment>
<comment type="interaction">
    <interactant intactId="EBI-749635">
        <id>P61601</id>
    </interactant>
    <interactant intactId="EBI-725647">
        <id>Q99732</id>
        <label>LITAF</label>
    </interactant>
    <organismsDiffer>false</organismsDiffer>
    <experiments>5</experiments>
</comment>
<comment type="interaction">
    <interactant intactId="EBI-749635">
        <id>P61601</id>
    </interactant>
    <interactant intactId="EBI-12382527">
        <id>O95868</id>
        <label>LY6G6D</label>
    </interactant>
    <organismsDiffer>false</organismsDiffer>
    <experiments>3</experiments>
</comment>
<comment type="interaction">
    <interactant intactId="EBI-749635">
        <id>P61601</id>
    </interactant>
    <interactant intactId="EBI-748397">
        <id>P50222</id>
        <label>MEOX2</label>
    </interactant>
    <organismsDiffer>false</organismsDiffer>
    <experiments>3</experiments>
</comment>
<comment type="interaction">
    <interactant intactId="EBI-749635">
        <id>P61601</id>
    </interactant>
    <interactant intactId="EBI-11988931">
        <id>Q96C03-3</id>
        <label>MIEF2</label>
    </interactant>
    <organismsDiffer>false</organismsDiffer>
    <experiments>3</experiments>
</comment>
<comment type="interaction">
    <interactant intactId="EBI-749635">
        <id>P61601</id>
    </interactant>
    <interactant intactId="EBI-12853322">
        <id>P55197-2</id>
        <label>MLLT10</label>
    </interactant>
    <organismsDiffer>false</organismsDiffer>
    <experiments>3</experiments>
</comment>
<comment type="interaction">
    <interactant intactId="EBI-749635">
        <id>P61601</id>
    </interactant>
    <interactant intactId="EBI-718622">
        <id>Q969H8</id>
        <label>MYDGF</label>
    </interactant>
    <organismsDiffer>false</organismsDiffer>
    <experiments>5</experiments>
</comment>
<comment type="interaction">
    <interactant intactId="EBI-749635">
        <id>P61601</id>
    </interactant>
    <interactant intactId="EBI-12135485">
        <id>P41271-2</id>
        <label>NBL1</label>
    </interactant>
    <organismsDiffer>false</organismsDiffer>
    <experiments>3</experiments>
</comment>
<comment type="interaction">
    <interactant intactId="EBI-749635">
        <id>P61601</id>
    </interactant>
    <interactant intactId="EBI-12253270">
        <id>Q9NWW9</id>
        <label>PLAAT2</label>
    </interactant>
    <organismsDiffer>false</organismsDiffer>
    <experiments>3</experiments>
</comment>
<comment type="interaction">
    <interactant intactId="EBI-749635">
        <id>P61601</id>
    </interactant>
    <interactant intactId="EBI-18282351">
        <id>Q6UWP8-2</id>
        <label>SBSN</label>
    </interactant>
    <organismsDiffer>false</organismsDiffer>
    <experiments>3</experiments>
</comment>
<comment type="interaction">
    <interactant intactId="EBI-749635">
        <id>P61601</id>
    </interactant>
    <interactant intactId="EBI-5235340">
        <id>Q7Z699</id>
        <label>SPRED1</label>
    </interactant>
    <organismsDiffer>false</organismsDiffer>
    <experiments>9</experiments>
</comment>
<comment type="interaction">
    <interactant intactId="EBI-749635">
        <id>P61601</id>
    </interactant>
    <interactant intactId="EBI-744915">
        <id>P10124</id>
        <label>SRGN</label>
    </interactant>
    <organismsDiffer>false</organismsDiffer>
    <experiments>3</experiments>
</comment>
<comment type="interaction">
    <interactant intactId="EBI-749635">
        <id>P61601</id>
    </interactant>
    <interactant intactId="EBI-17210651">
        <id>Q9NRR2</id>
        <label>TPSG1</label>
    </interactant>
    <organismsDiffer>false</organismsDiffer>
    <experiments>3</experiments>
</comment>
<comment type="interaction">
    <interactant intactId="EBI-749635">
        <id>P61601</id>
    </interactant>
    <interactant intactId="EBI-20863858">
        <id>Q7Z7D3</id>
        <label>VTCN1</label>
    </interactant>
    <organismsDiffer>false</organismsDiffer>
    <experiments>2</experiments>
</comment>
<comment type="interaction">
    <interactant intactId="EBI-749635">
        <id>P61601</id>
    </interactant>
    <interactant intactId="EBI-6480811">
        <id>Q7DB77</id>
        <label>tir</label>
    </interactant>
    <organismsDiffer>true</organismsDiffer>
    <experiments>3</experiments>
</comment>
<comment type="tissue specificity">
    <text>Retina, cerebrum, cerebellum, brain stem, spinal cord, testis, ovary and small intestine.</text>
</comment>
<comment type="similarity">
    <text evidence="4">Belongs to the recoverin family.</text>
</comment>
<sequence length="193" mass="22245">MGKQNSKLRPEVMQDLLESTDFTEHEIQEWYKGFLRDCPSGHLSMEEFKKIYGNFFPYGDASKFAEHVFRTFDANGDGTIDFREFIIALSVTSRGKLEQKLKWAFSMYDLDGNGYISKAEMLEIVQAIYKMVSSVMKMPEDESTPEKRTEKIFRQMDTNRDGKLSLEEFIRGAKSDPSIVRLLQCDPSSAGQF</sequence>
<protein>
    <recommendedName>
        <fullName>Neurocalcin-delta</fullName>
    </recommendedName>
</protein>
<keyword id="KW-0106">Calcium</keyword>
<keyword id="KW-0449">Lipoprotein</keyword>
<keyword id="KW-0479">Metal-binding</keyword>
<keyword id="KW-0519">Myristate</keyword>
<keyword id="KW-1267">Proteomics identification</keyword>
<keyword id="KW-1185">Reference proteome</keyword>
<keyword id="KW-0677">Repeat</keyword>